<dbReference type="EMBL" id="AC012391">
    <property type="status" value="NOT_ANNOTATED_CDS"/>
    <property type="molecule type" value="Genomic_DNA"/>
</dbReference>
<dbReference type="EMBL" id="CH471066">
    <property type="protein sequence ID" value="EAW49289.1"/>
    <property type="molecule type" value="Genomic_DNA"/>
</dbReference>
<dbReference type="CCDS" id="CCDS41575.1"/>
<dbReference type="RefSeq" id="NP_001099044.1">
    <property type="nucleotide sequence ID" value="NM_001105574.2"/>
</dbReference>
<dbReference type="SMR" id="A6NHT5"/>
<dbReference type="BioGRID" id="131098">
    <property type="interactions" value="8"/>
</dbReference>
<dbReference type="FunCoup" id="A6NHT5">
    <property type="interactions" value="1336"/>
</dbReference>
<dbReference type="STRING" id="9606.ENSP00000350549"/>
<dbReference type="GlyGen" id="A6NHT5">
    <property type="glycosylation" value="2 sites, 1 O-linked glycan (1 site)"/>
</dbReference>
<dbReference type="iPTMnet" id="A6NHT5"/>
<dbReference type="PhosphoSitePlus" id="A6NHT5"/>
<dbReference type="BioMuta" id="HMX3"/>
<dbReference type="jPOST" id="A6NHT5"/>
<dbReference type="MassIVE" id="A6NHT5"/>
<dbReference type="PaxDb" id="9606-ENSP00000350549"/>
<dbReference type="PeptideAtlas" id="A6NHT5"/>
<dbReference type="ProteomicsDB" id="1225"/>
<dbReference type="Pumba" id="A6NHT5"/>
<dbReference type="Antibodypedia" id="32340">
    <property type="antibodies" value="82 antibodies from 17 providers"/>
</dbReference>
<dbReference type="DNASU" id="340784"/>
<dbReference type="Ensembl" id="ENST00000357878.7">
    <property type="protein sequence ID" value="ENSP00000350549.4"/>
    <property type="gene ID" value="ENSG00000188620.11"/>
</dbReference>
<dbReference type="GeneID" id="340784"/>
<dbReference type="KEGG" id="hsa:340784"/>
<dbReference type="MANE-Select" id="ENST00000357878.7">
    <property type="protein sequence ID" value="ENSP00000350549.4"/>
    <property type="RefSeq nucleotide sequence ID" value="NM_001105574.2"/>
    <property type="RefSeq protein sequence ID" value="NP_001099044.1"/>
</dbReference>
<dbReference type="UCSC" id="uc010quc.3">
    <property type="organism name" value="human"/>
</dbReference>
<dbReference type="AGR" id="HGNC:5019"/>
<dbReference type="CTD" id="340784"/>
<dbReference type="DisGeNET" id="340784"/>
<dbReference type="GeneCards" id="HMX3"/>
<dbReference type="HGNC" id="HGNC:5019">
    <property type="gene designation" value="HMX3"/>
</dbReference>
<dbReference type="HPA" id="ENSG00000188620">
    <property type="expression patterns" value="Tissue enhanced (brain)"/>
</dbReference>
<dbReference type="MIM" id="613380">
    <property type="type" value="gene"/>
</dbReference>
<dbReference type="neXtProt" id="NX_A6NHT5"/>
<dbReference type="OpenTargets" id="ENSG00000188620"/>
<dbReference type="PharmGKB" id="PA29346"/>
<dbReference type="VEuPathDB" id="HostDB:ENSG00000188620"/>
<dbReference type="eggNOG" id="KOG0485">
    <property type="taxonomic scope" value="Eukaryota"/>
</dbReference>
<dbReference type="GeneTree" id="ENSGT00940000158286"/>
<dbReference type="HOGENOM" id="CLU_064096_0_0_1"/>
<dbReference type="InParanoid" id="A6NHT5"/>
<dbReference type="OMA" id="DKKPACR"/>
<dbReference type="OrthoDB" id="6159439at2759"/>
<dbReference type="PAN-GO" id="A6NHT5">
    <property type="GO annotations" value="4 GO annotations based on evolutionary models"/>
</dbReference>
<dbReference type="PhylomeDB" id="A6NHT5"/>
<dbReference type="TreeFam" id="TF320562"/>
<dbReference type="PathwayCommons" id="A6NHT5"/>
<dbReference type="BioGRID-ORCS" id="340784">
    <property type="hits" value="13 hits in 1176 CRISPR screens"/>
</dbReference>
<dbReference type="GenomeRNAi" id="340784"/>
<dbReference type="Pharos" id="A6NHT5">
    <property type="development level" value="Tbio"/>
</dbReference>
<dbReference type="PRO" id="PR:A6NHT5"/>
<dbReference type="Proteomes" id="UP000005640">
    <property type="component" value="Chromosome 10"/>
</dbReference>
<dbReference type="RNAct" id="A6NHT5">
    <property type="molecule type" value="protein"/>
</dbReference>
<dbReference type="Bgee" id="ENSG00000188620">
    <property type="expression patterns" value="Expressed in male germ line stem cell (sensu Vertebrata) in testis and 41 other cell types or tissues"/>
</dbReference>
<dbReference type="GO" id="GO:0000785">
    <property type="term" value="C:chromatin"/>
    <property type="evidence" value="ECO:0000247"/>
    <property type="project" value="NTNU_SB"/>
</dbReference>
<dbReference type="GO" id="GO:0005634">
    <property type="term" value="C:nucleus"/>
    <property type="evidence" value="ECO:0000318"/>
    <property type="project" value="GO_Central"/>
</dbReference>
<dbReference type="GO" id="GO:0000981">
    <property type="term" value="F:DNA-binding transcription factor activity, RNA polymerase II-specific"/>
    <property type="evidence" value="ECO:0000247"/>
    <property type="project" value="NTNU_SB"/>
</dbReference>
<dbReference type="GO" id="GO:0000977">
    <property type="term" value="F:RNA polymerase II transcription regulatory region sequence-specific DNA binding"/>
    <property type="evidence" value="ECO:0000318"/>
    <property type="project" value="GO_Central"/>
</dbReference>
<dbReference type="GO" id="GO:0007420">
    <property type="term" value="P:brain development"/>
    <property type="evidence" value="ECO:0007669"/>
    <property type="project" value="Ensembl"/>
</dbReference>
<dbReference type="GO" id="GO:0030154">
    <property type="term" value="P:cell differentiation"/>
    <property type="evidence" value="ECO:0007669"/>
    <property type="project" value="UniProtKB-KW"/>
</dbReference>
<dbReference type="GO" id="GO:0007566">
    <property type="term" value="P:embryo implantation"/>
    <property type="evidence" value="ECO:0007669"/>
    <property type="project" value="Ensembl"/>
</dbReference>
<dbReference type="GO" id="GO:0042472">
    <property type="term" value="P:inner ear morphogenesis"/>
    <property type="evidence" value="ECO:0007669"/>
    <property type="project" value="Ensembl"/>
</dbReference>
<dbReference type="GO" id="GO:0060135">
    <property type="term" value="P:maternal process involved in female pregnancy"/>
    <property type="evidence" value="ECO:0007669"/>
    <property type="project" value="Ensembl"/>
</dbReference>
<dbReference type="GO" id="GO:0050885">
    <property type="term" value="P:neuromuscular process controlling balance"/>
    <property type="evidence" value="ECO:0007669"/>
    <property type="project" value="Ensembl"/>
</dbReference>
<dbReference type="GO" id="GO:0006357">
    <property type="term" value="P:regulation of transcription by RNA polymerase II"/>
    <property type="evidence" value="ECO:0000318"/>
    <property type="project" value="GO_Central"/>
</dbReference>
<dbReference type="CDD" id="cd00086">
    <property type="entry name" value="homeodomain"/>
    <property type="match status" value="1"/>
</dbReference>
<dbReference type="FunFam" id="1.10.10.60:FF:000053">
    <property type="entry name" value="H6 family homeobox 2"/>
    <property type="match status" value="1"/>
</dbReference>
<dbReference type="Gene3D" id="1.10.10.60">
    <property type="entry name" value="Homeodomain-like"/>
    <property type="match status" value="1"/>
</dbReference>
<dbReference type="InterPro" id="IPR001356">
    <property type="entry name" value="HD"/>
</dbReference>
<dbReference type="InterPro" id="IPR020479">
    <property type="entry name" value="HD_metazoa"/>
</dbReference>
<dbReference type="InterPro" id="IPR051300">
    <property type="entry name" value="HMX_Homeobox_TF"/>
</dbReference>
<dbReference type="InterPro" id="IPR017970">
    <property type="entry name" value="Homeobox_CS"/>
</dbReference>
<dbReference type="InterPro" id="IPR009057">
    <property type="entry name" value="Homeodomain-like_sf"/>
</dbReference>
<dbReference type="PANTHER" id="PTHR46110">
    <property type="entry name" value="HOMEOBOX PROTEIN HMX"/>
    <property type="match status" value="1"/>
</dbReference>
<dbReference type="PANTHER" id="PTHR46110:SF2">
    <property type="entry name" value="HOMEOBOX PROTEIN HMX3"/>
    <property type="match status" value="1"/>
</dbReference>
<dbReference type="Pfam" id="PF00046">
    <property type="entry name" value="Homeodomain"/>
    <property type="match status" value="1"/>
</dbReference>
<dbReference type="PRINTS" id="PR00024">
    <property type="entry name" value="HOMEOBOX"/>
</dbReference>
<dbReference type="SMART" id="SM00389">
    <property type="entry name" value="HOX"/>
    <property type="match status" value="1"/>
</dbReference>
<dbReference type="SUPFAM" id="SSF46689">
    <property type="entry name" value="Homeodomain-like"/>
    <property type="match status" value="1"/>
</dbReference>
<dbReference type="PROSITE" id="PS00027">
    <property type="entry name" value="HOMEOBOX_1"/>
    <property type="match status" value="1"/>
</dbReference>
<dbReference type="PROSITE" id="PS50071">
    <property type="entry name" value="HOMEOBOX_2"/>
    <property type="match status" value="1"/>
</dbReference>
<protein>
    <recommendedName>
        <fullName>Homeobox protein HMX3</fullName>
    </recommendedName>
    <alternativeName>
        <fullName>Homeobox protein H6 family member 3</fullName>
    </alternativeName>
    <alternativeName>
        <fullName>Homeobox protein Nkx-5.1</fullName>
    </alternativeName>
</protein>
<comment type="function">
    <text evidence="1">Transcription factor involved in specification of neuronal cell types and which is required for inner ear and hypothalamus development. Binds to the 5'-CAAGTG-3' core sequence. Controls semicircular canal formation in the inner ear. Also required for hypothalamic/pituitary axis of the CNS (By similarity).</text>
</comment>
<comment type="subcellular location">
    <subcellularLocation>
        <location evidence="2">Nucleus</location>
    </subcellularLocation>
</comment>
<comment type="similarity">
    <text evidence="4">Belongs to the HMX homeobox family.</text>
</comment>
<proteinExistence type="evidence at protein level"/>
<organism>
    <name type="scientific">Homo sapiens</name>
    <name type="common">Human</name>
    <dbReference type="NCBI Taxonomy" id="9606"/>
    <lineage>
        <taxon>Eukaryota</taxon>
        <taxon>Metazoa</taxon>
        <taxon>Chordata</taxon>
        <taxon>Craniata</taxon>
        <taxon>Vertebrata</taxon>
        <taxon>Euteleostomi</taxon>
        <taxon>Mammalia</taxon>
        <taxon>Eutheria</taxon>
        <taxon>Euarchontoglires</taxon>
        <taxon>Primates</taxon>
        <taxon>Haplorrhini</taxon>
        <taxon>Catarrhini</taxon>
        <taxon>Hominidae</taxon>
        <taxon>Homo</taxon>
    </lineage>
</organism>
<feature type="chain" id="PRO_0000341382" description="Homeobox protein HMX3">
    <location>
        <begin position="1"/>
        <end position="357"/>
    </location>
</feature>
<feature type="DNA-binding region" description="Homeobox" evidence="2">
    <location>
        <begin position="227"/>
        <end position="286"/>
    </location>
</feature>
<feature type="region of interest" description="Disordered" evidence="3">
    <location>
        <begin position="1"/>
        <end position="58"/>
    </location>
</feature>
<feature type="region of interest" description="Disordered" evidence="3">
    <location>
        <begin position="129"/>
        <end position="229"/>
    </location>
</feature>
<feature type="compositionally biased region" description="Pro residues" evidence="3">
    <location>
        <begin position="16"/>
        <end position="27"/>
    </location>
</feature>
<feature type="compositionally biased region" description="Basic and acidic residues" evidence="3">
    <location>
        <begin position="130"/>
        <end position="140"/>
    </location>
</feature>
<feature type="compositionally biased region" description="Basic and acidic residues" evidence="3">
    <location>
        <begin position="149"/>
        <end position="173"/>
    </location>
</feature>
<feature type="compositionally biased region" description="Low complexity" evidence="3">
    <location>
        <begin position="191"/>
        <end position="209"/>
    </location>
</feature>
<feature type="compositionally biased region" description="Basic and acidic residues" evidence="3">
    <location>
        <begin position="210"/>
        <end position="223"/>
    </location>
</feature>
<feature type="modified residue" description="Phosphoserine" evidence="5">
    <location>
        <position position="153"/>
    </location>
</feature>
<feature type="modified residue" description="Phosphoserine" evidence="5">
    <location>
        <position position="180"/>
    </location>
</feature>
<reference key="1">
    <citation type="journal article" date="2004" name="Nature">
        <title>The DNA sequence and comparative analysis of human chromosome 10.</title>
        <authorList>
            <person name="Deloukas P."/>
            <person name="Earthrowl M.E."/>
            <person name="Grafham D.V."/>
            <person name="Rubenfield M."/>
            <person name="French L."/>
            <person name="Steward C.A."/>
            <person name="Sims S.K."/>
            <person name="Jones M.C."/>
            <person name="Searle S."/>
            <person name="Scott C."/>
            <person name="Howe K."/>
            <person name="Hunt S.E."/>
            <person name="Andrews T.D."/>
            <person name="Gilbert J.G.R."/>
            <person name="Swarbreck D."/>
            <person name="Ashurst J.L."/>
            <person name="Taylor A."/>
            <person name="Battles J."/>
            <person name="Bird C.P."/>
            <person name="Ainscough R."/>
            <person name="Almeida J.P."/>
            <person name="Ashwell R.I.S."/>
            <person name="Ambrose K.D."/>
            <person name="Babbage A.K."/>
            <person name="Bagguley C.L."/>
            <person name="Bailey J."/>
            <person name="Banerjee R."/>
            <person name="Bates K."/>
            <person name="Beasley H."/>
            <person name="Bray-Allen S."/>
            <person name="Brown A.J."/>
            <person name="Brown J.Y."/>
            <person name="Burford D.C."/>
            <person name="Burrill W."/>
            <person name="Burton J."/>
            <person name="Cahill P."/>
            <person name="Camire D."/>
            <person name="Carter N.P."/>
            <person name="Chapman J.C."/>
            <person name="Clark S.Y."/>
            <person name="Clarke G."/>
            <person name="Clee C.M."/>
            <person name="Clegg S."/>
            <person name="Corby N."/>
            <person name="Coulson A."/>
            <person name="Dhami P."/>
            <person name="Dutta I."/>
            <person name="Dunn M."/>
            <person name="Faulkner L."/>
            <person name="Frankish A."/>
            <person name="Frankland J.A."/>
            <person name="Garner P."/>
            <person name="Garnett J."/>
            <person name="Gribble S."/>
            <person name="Griffiths C."/>
            <person name="Grocock R."/>
            <person name="Gustafson E."/>
            <person name="Hammond S."/>
            <person name="Harley J.L."/>
            <person name="Hart E."/>
            <person name="Heath P.D."/>
            <person name="Ho T.P."/>
            <person name="Hopkins B."/>
            <person name="Horne J."/>
            <person name="Howden P.J."/>
            <person name="Huckle E."/>
            <person name="Hynds C."/>
            <person name="Johnson C."/>
            <person name="Johnson D."/>
            <person name="Kana A."/>
            <person name="Kay M."/>
            <person name="Kimberley A.M."/>
            <person name="Kershaw J.K."/>
            <person name="Kokkinaki M."/>
            <person name="Laird G.K."/>
            <person name="Lawlor S."/>
            <person name="Lee H.M."/>
            <person name="Leongamornlert D.A."/>
            <person name="Laird G."/>
            <person name="Lloyd C."/>
            <person name="Lloyd D.M."/>
            <person name="Loveland J."/>
            <person name="Lovell J."/>
            <person name="McLaren S."/>
            <person name="McLay K.E."/>
            <person name="McMurray A."/>
            <person name="Mashreghi-Mohammadi M."/>
            <person name="Matthews L."/>
            <person name="Milne S."/>
            <person name="Nickerson T."/>
            <person name="Nguyen M."/>
            <person name="Overton-Larty E."/>
            <person name="Palmer S.A."/>
            <person name="Pearce A.V."/>
            <person name="Peck A.I."/>
            <person name="Pelan S."/>
            <person name="Phillimore B."/>
            <person name="Porter K."/>
            <person name="Rice C.M."/>
            <person name="Rogosin A."/>
            <person name="Ross M.T."/>
            <person name="Sarafidou T."/>
            <person name="Sehra H.K."/>
            <person name="Shownkeen R."/>
            <person name="Skuce C.D."/>
            <person name="Smith M."/>
            <person name="Standring L."/>
            <person name="Sycamore N."/>
            <person name="Tester J."/>
            <person name="Thorpe A."/>
            <person name="Torcasso W."/>
            <person name="Tracey A."/>
            <person name="Tromans A."/>
            <person name="Tsolas J."/>
            <person name="Wall M."/>
            <person name="Walsh J."/>
            <person name="Wang H."/>
            <person name="Weinstock K."/>
            <person name="West A.P."/>
            <person name="Willey D.L."/>
            <person name="Whitehead S.L."/>
            <person name="Wilming L."/>
            <person name="Wray P.W."/>
            <person name="Young L."/>
            <person name="Chen Y."/>
            <person name="Lovering R.C."/>
            <person name="Moschonas N.K."/>
            <person name="Siebert R."/>
            <person name="Fechtel K."/>
            <person name="Bentley D."/>
            <person name="Durbin R.M."/>
            <person name="Hubbard T."/>
            <person name="Doucette-Stamm L."/>
            <person name="Beck S."/>
            <person name="Smith D.R."/>
            <person name="Rogers J."/>
        </authorList>
    </citation>
    <scope>NUCLEOTIDE SEQUENCE [LARGE SCALE GENOMIC DNA]</scope>
</reference>
<reference key="2">
    <citation type="submission" date="2005-09" db="EMBL/GenBank/DDBJ databases">
        <authorList>
            <person name="Mural R.J."/>
            <person name="Istrail S."/>
            <person name="Sutton G.G."/>
            <person name="Florea L."/>
            <person name="Halpern A.L."/>
            <person name="Mobarry C.M."/>
            <person name="Lippert R."/>
            <person name="Walenz B."/>
            <person name="Shatkay H."/>
            <person name="Dew I."/>
            <person name="Miller J.R."/>
            <person name="Flanigan M.J."/>
            <person name="Edwards N.J."/>
            <person name="Bolanos R."/>
            <person name="Fasulo D."/>
            <person name="Halldorsson B.V."/>
            <person name="Hannenhalli S."/>
            <person name="Turner R."/>
            <person name="Yooseph S."/>
            <person name="Lu F."/>
            <person name="Nusskern D.R."/>
            <person name="Shue B.C."/>
            <person name="Zheng X.H."/>
            <person name="Zhong F."/>
            <person name="Delcher A.L."/>
            <person name="Huson D.H."/>
            <person name="Kravitz S.A."/>
            <person name="Mouchard L."/>
            <person name="Reinert K."/>
            <person name="Remington K.A."/>
            <person name="Clark A.G."/>
            <person name="Waterman M.S."/>
            <person name="Eichler E.E."/>
            <person name="Adams M.D."/>
            <person name="Hunkapiller M.W."/>
            <person name="Myers E.W."/>
            <person name="Venter J.C."/>
        </authorList>
    </citation>
    <scope>NUCLEOTIDE SEQUENCE [LARGE SCALE GENOMIC DNA]</scope>
</reference>
<reference key="3">
    <citation type="journal article" date="2013" name="J. Proteome Res.">
        <title>Toward a comprehensive characterization of a human cancer cell phosphoproteome.</title>
        <authorList>
            <person name="Zhou H."/>
            <person name="Di Palma S."/>
            <person name="Preisinger C."/>
            <person name="Peng M."/>
            <person name="Polat A.N."/>
            <person name="Heck A.J."/>
            <person name="Mohammed S."/>
        </authorList>
    </citation>
    <scope>PHOSPHORYLATION [LARGE SCALE ANALYSIS] AT SER-153 AND SER-180</scope>
    <scope>IDENTIFICATION BY MASS SPECTROMETRY [LARGE SCALE ANALYSIS]</scope>
    <source>
        <tissue>Erythroleukemia</tissue>
    </source>
</reference>
<evidence type="ECO:0000250" key="1"/>
<evidence type="ECO:0000255" key="2">
    <source>
        <dbReference type="PROSITE-ProRule" id="PRU00108"/>
    </source>
</evidence>
<evidence type="ECO:0000256" key="3">
    <source>
        <dbReference type="SAM" id="MobiDB-lite"/>
    </source>
</evidence>
<evidence type="ECO:0000305" key="4"/>
<evidence type="ECO:0007744" key="5">
    <source>
    </source>
</evidence>
<keyword id="KW-0217">Developmental protein</keyword>
<keyword id="KW-0221">Differentiation</keyword>
<keyword id="KW-0238">DNA-binding</keyword>
<keyword id="KW-0371">Homeobox</keyword>
<keyword id="KW-0524">Neurogenesis</keyword>
<keyword id="KW-0539">Nucleus</keyword>
<keyword id="KW-0597">Phosphoprotein</keyword>
<keyword id="KW-1267">Proteomics identification</keyword>
<keyword id="KW-1185">Reference proteome</keyword>
<keyword id="KW-0804">Transcription</keyword>
<keyword id="KW-0805">Transcription regulation</keyword>
<name>HMX3_HUMAN</name>
<accession>A6NHT5</accession>
<accession>A8MU06</accession>
<sequence>MPEPGPDAAGTASAQPQPPPPPPPAPKESPFSIKNLLNGDHHRPPPKPQPPPRTLFAPASAAAAAAAAAAAAAKGALEGAAGFALSQVGDLAFPRFEIPAQRFALPAHYLERSPAWWYPYTLTPAGGHLPRPEASEKALLRDSSPASGTDRDSPEPLLKADPDHKELDSKSPDEIILEESDSEESKKEGEAAPGAAGASVGAAAATPGAEDWKKGAESPEKKPACRKKKTRTVFSRSQVFQLESTFDMKRYLSSSERAGLAASLHLTETQVKIWFQNRRNKWKRQLAAELEAANLSHAAAQRIVRVPILYHENSAAEGAAAAAAGAPVPVSQPLLTFPHPVYYSHPVVSSVPLLRPV</sequence>
<gene>
    <name type="primary">HMX3</name>
    <name type="synonym">NKX-5.1</name>
    <name type="synonym">NKX5-1</name>
</gene>